<comment type="function">
    <text evidence="5 6 7">Asparagine-specific endopeptidase that may be involved in processing of proteins targeted to vacuoles. Cysteine protease required for post-translational proteolysis of seed storage proteins in the protein storage vacuole (PSV) of developing seeds, by processing of proglutelin precursor to mature glutelin subunits, thus contributing to the formation of protein crystalline structures in PSV (PubMed:19154227, PubMed:19933265, Ref.1).</text>
</comment>
<comment type="catalytic activity">
    <reaction evidence="5">
        <text>Hydrolysis of proteins and small molecule substrates at -Asn-|-Xaa- bonds.</text>
        <dbReference type="EC" id="3.4.22.34"/>
    </reaction>
</comment>
<comment type="subcellular location">
    <subcellularLocation>
        <location evidence="5">Protein storage vacuole</location>
    </subcellularLocation>
</comment>
<comment type="tissue specificity">
    <text evidence="6">Expressed in developing seeds.</text>
</comment>
<comment type="PTM">
    <text evidence="5">Auto-catalytic activation.</text>
</comment>
<comment type="disruption phenotype">
    <text evidence="6 7">In PAK22, higher quantities of 57 kDa polypeptides and lower levels of 40 kDa acidic and 20 kDa basic glutelin subunits in seeds due to reduced vacuolar processing enzyme (VPE) activity and leading to non-crystalline lattice structure of protein storage vacuoles (PSVs). Seedlings growth retardation.</text>
</comment>
<comment type="similarity">
    <text evidence="10">Belongs to the peptidase C13 family.</text>
</comment>
<protein>
    <recommendedName>
        <fullName evidence="8">Vacuolar-processing enzyme beta-isozyme 1</fullName>
        <shortName evidence="8">Beta-VPE 1</shortName>
        <shortName evidence="8">OsVPE1</shortName>
        <ecNumber evidence="5">3.4.22.34</ecNumber>
    </recommendedName>
    <alternativeName>
        <fullName evidence="10">Asparaginyl endopeptidase VPE1</fullName>
    </alternativeName>
</protein>
<feature type="signal peptide" evidence="3">
    <location>
        <begin position="1"/>
        <end position="23"/>
    </location>
</feature>
<feature type="chain" id="PRO_0000431974" description="Vacuolar-processing enzyme beta-isozyme 1" evidence="3">
    <location>
        <begin position="24"/>
        <end position="497"/>
    </location>
</feature>
<feature type="active site" evidence="1">
    <location>
        <position position="180"/>
    </location>
</feature>
<feature type="active site" description="Nucleophile" evidence="1">
    <location>
        <position position="222"/>
    </location>
</feature>
<feature type="site" description="Required for post-translational maturation and enzyme activity" evidence="5">
    <location>
        <position position="269"/>
    </location>
</feature>
<feature type="glycosylation site" description="N-linked (GlcNAc...) asparagine" evidence="4">
    <location>
        <position position="153"/>
    </location>
</feature>
<feature type="glycosylation site" description="N-linked (GlcNAc...) asparagine" evidence="4">
    <location>
        <position position="340"/>
    </location>
</feature>
<feature type="disulfide bond" evidence="2">
    <location>
        <begin position="255"/>
        <end position="269"/>
    </location>
</feature>
<feature type="disulfide bond" evidence="2">
    <location>
        <begin position="432"/>
        <end position="462"/>
    </location>
</feature>
<feature type="disulfide bond" evidence="2">
    <location>
        <begin position="444"/>
        <end position="479"/>
    </location>
</feature>
<feature type="mutagenesis site" description="In W379; loss of enzyme activity probably due to an incorrectly post-translational maturation by cleavage leading to the accumulation of the 57-kDa glutelin precursor. Reduced vacuolar processing enzyme (VPE) activity leading to non-crystalline lattice structure of protein storage vacuoles (PSVs)." evidence="5 6">
    <original>C</original>
    <variation>G</variation>
    <location>
        <position position="269"/>
    </location>
</feature>
<feature type="mutagenesis site" description="In EM856; reduced vacuolar processing enzyme (VPE) activity leading to non-crystalline lattice structure of protein storage vacuoles (PSVs)." evidence="6">
    <original>G</original>
    <variation>D</variation>
    <location>
        <position position="333"/>
    </location>
</feature>
<organism evidence="11">
    <name type="scientific">Oryza sativa subsp. japonica</name>
    <name type="common">Rice</name>
    <dbReference type="NCBI Taxonomy" id="39947"/>
    <lineage>
        <taxon>Eukaryota</taxon>
        <taxon>Viridiplantae</taxon>
        <taxon>Streptophyta</taxon>
        <taxon>Embryophyta</taxon>
        <taxon>Tracheophyta</taxon>
        <taxon>Spermatophyta</taxon>
        <taxon>Magnoliopsida</taxon>
        <taxon>Liliopsida</taxon>
        <taxon>Poales</taxon>
        <taxon>Poaceae</taxon>
        <taxon>BOP clade</taxon>
        <taxon>Oryzoideae</taxon>
        <taxon>Oryzeae</taxon>
        <taxon>Oryzinae</taxon>
        <taxon>Oryza</taxon>
        <taxon>Oryza sativa</taxon>
    </lineage>
</organism>
<accession>Q84LM2</accession>
<accession>A0A0P0WCV4</accession>
<dbReference type="EC" id="3.4.22.34" evidence="5"/>
<dbReference type="EMBL" id="AB109637">
    <property type="protein sequence ID" value="BAC76418.1"/>
    <property type="molecule type" value="mRNA"/>
</dbReference>
<dbReference type="EMBL" id="AP008210">
    <property type="protein sequence ID" value="BAF15342.1"/>
    <property type="molecule type" value="Genomic_DNA"/>
</dbReference>
<dbReference type="EMBL" id="AP014960">
    <property type="protein sequence ID" value="BAS90261.1"/>
    <property type="molecule type" value="Genomic_DNA"/>
</dbReference>
<dbReference type="EMBL" id="CM000141">
    <property type="protein sequence ID" value="EEE61412.1"/>
    <property type="molecule type" value="Genomic_DNA"/>
</dbReference>
<dbReference type="RefSeq" id="XP_015636414.1">
    <property type="nucleotide sequence ID" value="XM_015780928.1"/>
</dbReference>
<dbReference type="SMR" id="Q84LM2"/>
<dbReference type="FunCoup" id="Q84LM2">
    <property type="interactions" value="501"/>
</dbReference>
<dbReference type="STRING" id="39947.Q84LM2"/>
<dbReference type="MEROPS" id="C13.001"/>
<dbReference type="GlyCosmos" id="Q84LM2">
    <property type="glycosylation" value="2 sites, No reported glycans"/>
</dbReference>
<dbReference type="PaxDb" id="39947-Q84LM2"/>
<dbReference type="EnsemblPlants" id="Os04t0537900-01">
    <property type="protein sequence ID" value="Os04t0537900-01"/>
    <property type="gene ID" value="Os04g0537900"/>
</dbReference>
<dbReference type="Gramene" id="Os04t0537900-01">
    <property type="protein sequence ID" value="Os04t0537900-01"/>
    <property type="gene ID" value="Os04g0537900"/>
</dbReference>
<dbReference type="KEGG" id="dosa:Os04g0537900"/>
<dbReference type="eggNOG" id="KOG1348">
    <property type="taxonomic scope" value="Eukaryota"/>
</dbReference>
<dbReference type="HOGENOM" id="CLU_024160_0_0_1"/>
<dbReference type="InParanoid" id="Q84LM2"/>
<dbReference type="OMA" id="ACGRYNS"/>
<dbReference type="OrthoDB" id="192611at2759"/>
<dbReference type="PlantReactome" id="R-OSA-9626305">
    <property type="pathway name" value="Regulatory network of nutrient accumulation"/>
</dbReference>
<dbReference type="Proteomes" id="UP000000763">
    <property type="component" value="Chromosome 4"/>
</dbReference>
<dbReference type="Proteomes" id="UP000007752">
    <property type="component" value="Chromosome 4"/>
</dbReference>
<dbReference type="Proteomes" id="UP000059680">
    <property type="component" value="Chromosome 4"/>
</dbReference>
<dbReference type="GO" id="GO:0000326">
    <property type="term" value="C:protein storage vacuole"/>
    <property type="evidence" value="ECO:0000314"/>
    <property type="project" value="UniProtKB"/>
</dbReference>
<dbReference type="GO" id="GO:0004197">
    <property type="term" value="F:cysteine-type endopeptidase activity"/>
    <property type="evidence" value="ECO:0000315"/>
    <property type="project" value="UniProtKB"/>
</dbReference>
<dbReference type="GO" id="GO:0045735">
    <property type="term" value="F:nutrient reservoir activity"/>
    <property type="evidence" value="ECO:0007669"/>
    <property type="project" value="UniProtKB-KW"/>
</dbReference>
<dbReference type="GO" id="GO:1990019">
    <property type="term" value="P:protein storage vacuole organization"/>
    <property type="evidence" value="ECO:0000315"/>
    <property type="project" value="UniProtKB"/>
</dbReference>
<dbReference type="GO" id="GO:0051603">
    <property type="term" value="P:proteolysis involved in protein catabolic process"/>
    <property type="evidence" value="ECO:0000318"/>
    <property type="project" value="GO_Central"/>
</dbReference>
<dbReference type="GO" id="GO:0006624">
    <property type="term" value="P:vacuolar protein processing"/>
    <property type="evidence" value="ECO:0000315"/>
    <property type="project" value="UniProtKB"/>
</dbReference>
<dbReference type="CDD" id="cd21115">
    <property type="entry name" value="legumain_C"/>
    <property type="match status" value="1"/>
</dbReference>
<dbReference type="FunFam" id="1.10.132.130:FF:000001">
    <property type="entry name" value="Vacuolar-processing enzyme beta-isozyme"/>
    <property type="match status" value="1"/>
</dbReference>
<dbReference type="FunFam" id="3.40.50.1460:FF:000005">
    <property type="entry name" value="Vacuolar-processing enzyme beta-isozyme"/>
    <property type="match status" value="1"/>
</dbReference>
<dbReference type="Gene3D" id="1.10.132.130">
    <property type="match status" value="1"/>
</dbReference>
<dbReference type="Gene3D" id="3.40.50.1460">
    <property type="match status" value="1"/>
</dbReference>
<dbReference type="InterPro" id="IPR043577">
    <property type="entry name" value="AE"/>
</dbReference>
<dbReference type="InterPro" id="IPR048501">
    <property type="entry name" value="Legum_prodom"/>
</dbReference>
<dbReference type="InterPro" id="IPR046427">
    <property type="entry name" value="Legumain_prodom_sf"/>
</dbReference>
<dbReference type="InterPro" id="IPR001096">
    <property type="entry name" value="Peptidase_C13"/>
</dbReference>
<dbReference type="PANTHER" id="PTHR12000">
    <property type="entry name" value="HEMOGLOBINASE FAMILY MEMBER"/>
    <property type="match status" value="1"/>
</dbReference>
<dbReference type="PANTHER" id="PTHR12000:SF25">
    <property type="entry name" value="VACUOLAR-PROCESSING ENZYME BETA-ISOZYME 1"/>
    <property type="match status" value="1"/>
</dbReference>
<dbReference type="Pfam" id="PF20985">
    <property type="entry name" value="Legum_prodom"/>
    <property type="match status" value="1"/>
</dbReference>
<dbReference type="Pfam" id="PF01650">
    <property type="entry name" value="Peptidase_C13"/>
    <property type="match status" value="1"/>
</dbReference>
<dbReference type="PIRSF" id="PIRSF500139">
    <property type="entry name" value="AE"/>
    <property type="match status" value="1"/>
</dbReference>
<dbReference type="PIRSF" id="PIRSF019663">
    <property type="entry name" value="Legumain"/>
    <property type="match status" value="1"/>
</dbReference>
<dbReference type="PRINTS" id="PR00776">
    <property type="entry name" value="HEMOGLOBNASE"/>
</dbReference>
<sequence>MAARCWVWGFVVALLAVAAAADGEEEEGKWEPLIRMPTEEGDDAEAAAPAPAPAAADYGGTRWAVLVAGSSGYGNYRHQADVCHAYQILQKGGVKEENIVVFMYDDIAHNILNPRPGTIINHPKGGDVYAGVPKDYTGHQVTTENFFAVLLGNKTAVTGGSGKVIDSKPEDHIFIYYSDHGGPGVLGMPNLPYLYAGDFIKVLQKKHASNSYSKMVIYVEACESGSIFEGLMPENLNIYVTTASNAVENSWGTYCPGEEPSPPPEYITCLGDMYSVAWMEDSETHNLKKETIEDQYELVKKRTSNANKLNEGSHVMEYGDKTFKDEKLFLYQGFNPANGNITNELIWPVPKATVNQRDADLLFMWKRYEQLNGVSEDKLRALREIEDTIAHRKHLDSSIDFIGKLVFGFENGPLALEAARSSGQPLVDNWDCLKKMVRIFESQCGSLTQYGMKYMRAFANICNNGVSEAKMMEASINACGRYNSARWSPMTEGGHSA</sequence>
<name>VPE1_ORYSJ</name>
<proteinExistence type="evidence at protein level"/>
<reference key="1">
    <citation type="journal article" date="2002" name="Rice Genet. Newsl.">
        <title>High-resolution mapping of glup3 gene accumulating high amount of glutelin precursor.</title>
        <authorList>
            <person name="Kumamaru T."/>
            <person name="Uemura U."/>
            <person name="Takemoto Y."/>
            <person name="Ogawa M."/>
            <person name="Satoh H."/>
        </authorList>
    </citation>
    <scope>NUCLEOTIDE SEQUENCE [MRNA]</scope>
    <scope>FUNCTION</scope>
    <scope>DISRUPTION PHENOTYPE</scope>
    <source>
        <strain>cv. Kinmaze</strain>
    </source>
</reference>
<reference key="2">
    <citation type="journal article" date="2005" name="Nature">
        <title>The map-based sequence of the rice genome.</title>
        <authorList>
            <consortium name="International rice genome sequencing project (IRGSP)"/>
        </authorList>
    </citation>
    <scope>NUCLEOTIDE SEQUENCE [LARGE SCALE GENOMIC DNA]</scope>
    <source>
        <strain>cv. Nipponbare</strain>
    </source>
</reference>
<reference key="3">
    <citation type="journal article" date="2008" name="Nucleic Acids Res.">
        <title>The rice annotation project database (RAP-DB): 2008 update.</title>
        <authorList>
            <consortium name="The rice annotation project (RAP)"/>
        </authorList>
    </citation>
    <scope>GENOME REANNOTATION</scope>
    <source>
        <strain>cv. Nipponbare</strain>
    </source>
</reference>
<reference key="4">
    <citation type="journal article" date="2013" name="Rice">
        <title>Improvement of the Oryza sativa Nipponbare reference genome using next generation sequence and optical map data.</title>
        <authorList>
            <person name="Kawahara Y."/>
            <person name="de la Bastide M."/>
            <person name="Hamilton J.P."/>
            <person name="Kanamori H."/>
            <person name="McCombie W.R."/>
            <person name="Ouyang S."/>
            <person name="Schwartz D.C."/>
            <person name="Tanaka T."/>
            <person name="Wu J."/>
            <person name="Zhou S."/>
            <person name="Childs K.L."/>
            <person name="Davidson R.M."/>
            <person name="Lin H."/>
            <person name="Quesada-Ocampo L."/>
            <person name="Vaillancourt B."/>
            <person name="Sakai H."/>
            <person name="Lee S.S."/>
            <person name="Kim J."/>
            <person name="Numa H."/>
            <person name="Itoh T."/>
            <person name="Buell C.R."/>
            <person name="Matsumoto T."/>
        </authorList>
    </citation>
    <scope>GENOME REANNOTATION</scope>
    <source>
        <strain>cv. Nipponbare</strain>
    </source>
</reference>
<reference key="5">
    <citation type="journal article" date="2005" name="PLoS Biol.">
        <title>The genomes of Oryza sativa: a history of duplications.</title>
        <authorList>
            <person name="Yu J."/>
            <person name="Wang J."/>
            <person name="Lin W."/>
            <person name="Li S."/>
            <person name="Li H."/>
            <person name="Zhou J."/>
            <person name="Ni P."/>
            <person name="Dong W."/>
            <person name="Hu S."/>
            <person name="Zeng C."/>
            <person name="Zhang J."/>
            <person name="Zhang Y."/>
            <person name="Li R."/>
            <person name="Xu Z."/>
            <person name="Li S."/>
            <person name="Li X."/>
            <person name="Zheng H."/>
            <person name="Cong L."/>
            <person name="Lin L."/>
            <person name="Yin J."/>
            <person name="Geng J."/>
            <person name="Li G."/>
            <person name="Shi J."/>
            <person name="Liu J."/>
            <person name="Lv H."/>
            <person name="Li J."/>
            <person name="Wang J."/>
            <person name="Deng Y."/>
            <person name="Ran L."/>
            <person name="Shi X."/>
            <person name="Wang X."/>
            <person name="Wu Q."/>
            <person name="Li C."/>
            <person name="Ren X."/>
            <person name="Wang J."/>
            <person name="Wang X."/>
            <person name="Li D."/>
            <person name="Liu D."/>
            <person name="Zhang X."/>
            <person name="Ji Z."/>
            <person name="Zhao W."/>
            <person name="Sun Y."/>
            <person name="Zhang Z."/>
            <person name="Bao J."/>
            <person name="Han Y."/>
            <person name="Dong L."/>
            <person name="Ji J."/>
            <person name="Chen P."/>
            <person name="Wu S."/>
            <person name="Liu J."/>
            <person name="Xiao Y."/>
            <person name="Bu D."/>
            <person name="Tan J."/>
            <person name="Yang L."/>
            <person name="Ye C."/>
            <person name="Zhang J."/>
            <person name="Xu J."/>
            <person name="Zhou Y."/>
            <person name="Yu Y."/>
            <person name="Zhang B."/>
            <person name="Zhuang S."/>
            <person name="Wei H."/>
            <person name="Liu B."/>
            <person name="Lei M."/>
            <person name="Yu H."/>
            <person name="Li Y."/>
            <person name="Xu H."/>
            <person name="Wei S."/>
            <person name="He X."/>
            <person name="Fang L."/>
            <person name="Zhang Z."/>
            <person name="Zhang Y."/>
            <person name="Huang X."/>
            <person name="Su Z."/>
            <person name="Tong W."/>
            <person name="Li J."/>
            <person name="Tong Z."/>
            <person name="Li S."/>
            <person name="Ye J."/>
            <person name="Wang L."/>
            <person name="Fang L."/>
            <person name="Lei T."/>
            <person name="Chen C.-S."/>
            <person name="Chen H.-C."/>
            <person name="Xu Z."/>
            <person name="Li H."/>
            <person name="Huang H."/>
            <person name="Zhang F."/>
            <person name="Xu H."/>
            <person name="Li N."/>
            <person name="Zhao C."/>
            <person name="Li S."/>
            <person name="Dong L."/>
            <person name="Huang Y."/>
            <person name="Li L."/>
            <person name="Xi Y."/>
            <person name="Qi Q."/>
            <person name="Li W."/>
            <person name="Zhang B."/>
            <person name="Hu W."/>
            <person name="Zhang Y."/>
            <person name="Tian X."/>
            <person name="Jiao Y."/>
            <person name="Liang X."/>
            <person name="Jin J."/>
            <person name="Gao L."/>
            <person name="Zheng W."/>
            <person name="Hao B."/>
            <person name="Liu S.-M."/>
            <person name="Wang W."/>
            <person name="Yuan L."/>
            <person name="Cao M."/>
            <person name="McDermott J."/>
            <person name="Samudrala R."/>
            <person name="Wang J."/>
            <person name="Wong G.K.-S."/>
            <person name="Yang H."/>
        </authorList>
    </citation>
    <scope>NUCLEOTIDE SEQUENCE [LARGE SCALE GENOMIC DNA]</scope>
    <source>
        <strain>cv. Nipponbare</strain>
    </source>
</reference>
<reference key="6">
    <citation type="journal article" date="2009" name="Plant J.">
        <title>The vacuolar processing enzyme OsVPE1 is required for efficient glutelin processing in rice.</title>
        <authorList>
            <person name="Wang Y."/>
            <person name="Zhu S."/>
            <person name="Liu S."/>
            <person name="Jiang L."/>
            <person name="Chen L."/>
            <person name="Ren Y."/>
            <person name="Han X."/>
            <person name="Liu F."/>
            <person name="Ji S."/>
            <person name="Liu X."/>
            <person name="Wan J."/>
        </authorList>
    </citation>
    <scope>FUNCTION</scope>
    <scope>MUTAGENESIS OF CYS-269</scope>
    <scope>SUBCELLULAR LOCATION</scope>
    <scope>SITE</scope>
    <scope>CATALYTIC ACTIVITY</scope>
    <scope>AUTO-CATALYTIC ACTIVATION</scope>
</reference>
<reference key="7">
    <citation type="journal article" date="2010" name="Plant Cell Physiol.">
        <title>Vacuolar processing enzyme plays an essential role in the crystalline structure of glutelin in rice seed.</title>
        <authorList>
            <person name="Kumamaru T."/>
            <person name="Uemura Y."/>
            <person name="Inoue Y."/>
            <person name="Takemoto Y."/>
            <person name="Siddiqui S.U."/>
            <person name="Ogawa M."/>
            <person name="Hara-Nishimura I."/>
            <person name="Satoh H."/>
        </authorList>
    </citation>
    <scope>FUNCTION</scope>
    <scope>DISRUPTION PHENOTYPE</scope>
    <scope>MUTAGENESIS OF CYS-269 AND GLY-333</scope>
    <scope>TISSUE SPECIFICITY</scope>
</reference>
<evidence type="ECO:0000250" key="1">
    <source>
        <dbReference type="UniProtKB" id="O89017"/>
    </source>
</evidence>
<evidence type="ECO:0000250" key="2">
    <source>
        <dbReference type="UniProtKB" id="P49046"/>
    </source>
</evidence>
<evidence type="ECO:0000255" key="3"/>
<evidence type="ECO:0000255" key="4">
    <source>
        <dbReference type="PROSITE-ProRule" id="PRU00498"/>
    </source>
</evidence>
<evidence type="ECO:0000269" key="5">
    <source>
    </source>
</evidence>
<evidence type="ECO:0000269" key="6">
    <source>
    </source>
</evidence>
<evidence type="ECO:0000269" key="7">
    <source ref="1"/>
</evidence>
<evidence type="ECO:0000303" key="8">
    <source>
    </source>
</evidence>
<evidence type="ECO:0000303" key="9">
    <source ref="1"/>
</evidence>
<evidence type="ECO:0000305" key="10"/>
<evidence type="ECO:0000312" key="11">
    <source>
        <dbReference type="EMBL" id="BAC76418.1"/>
    </source>
</evidence>
<evidence type="ECO:0000312" key="12">
    <source>
        <dbReference type="EMBL" id="BAF15342.1"/>
    </source>
</evidence>
<evidence type="ECO:0000312" key="13">
    <source>
        <dbReference type="EMBL" id="EEE61412.1"/>
    </source>
</evidence>
<keyword id="KW-1015">Disulfide bond</keyword>
<keyword id="KW-0325">Glycoprotein</keyword>
<keyword id="KW-0378">Hydrolase</keyword>
<keyword id="KW-0645">Protease</keyword>
<keyword id="KW-1185">Reference proteome</keyword>
<keyword id="KW-0708">Seed storage protein</keyword>
<keyword id="KW-0732">Signal</keyword>
<keyword id="KW-0758">Storage protein</keyword>
<keyword id="KW-0788">Thiol protease</keyword>
<keyword id="KW-0926">Vacuole</keyword>
<gene>
    <name evidence="8" type="primary">VPE1</name>
    <name evidence="9" type="synonym">Glup3</name>
    <name evidence="12" type="ordered locus">Os04g0537900</name>
    <name evidence="13" type="ORF">OsJ_15605</name>
</gene>